<organism>
    <name type="scientific">Raspberry bushy dwarf virus (isolate Malling Jewel raspberry/R15)</name>
    <name type="common">RBDV</name>
    <dbReference type="NCBI Taxonomy" id="652675"/>
    <lineage>
        <taxon>Viruses</taxon>
        <taxon>Riboviria</taxon>
        <taxon>Orthornavirae</taxon>
        <taxon>Kitrinoviricota</taxon>
        <taxon>Alsuviricetes</taxon>
        <taxon>Martellivirales</taxon>
        <taxon>Mayoviridae</taxon>
        <taxon>Idaeovirus</taxon>
        <taxon>Idaeovirus rubi</taxon>
    </lineage>
</organism>
<sequence length="358" mass="38869">MFSRSSSTRSSLVGSRSGSIFGGGSVKKSSTVRGFSAGLERSRGLPSASAGENQISLPGLRIPVKASSQPGNYYLKERGIDLPIVQQQKFLAADGKEMGECYLLDTSRTDLLDAAKAALNESNLLEFNKFKEFKKYKGKNNEFSLVEASVFDKLIRKDDSPIHLNRLLIAVLPAVGKGTPGTARIKIRDARLDDGYGELFSSENRVDSGYIYCINVGYSVPKSEIDYKINIDFAGVPIKDGKSPIWVKAAFSLAGGPPVFLDGTMSLGAEILPDSHKELLGTSALLLNEANSNRKSFSGDDGELRRDYPYKRFEEISPLDSISQVDTASQDSVNEVNTENVQNGTGEVYLAPPSHSVY</sequence>
<protein>
    <recommendedName>
        <fullName>Putative movement protein</fullName>
    </recommendedName>
</protein>
<dbReference type="EMBL" id="S55890">
    <property type="protein sequence ID" value="AAB19767.1"/>
    <property type="molecule type" value="Genomic_RNA"/>
</dbReference>
<dbReference type="PIR" id="JQ1292">
    <property type="entry name" value="JQ1292"/>
</dbReference>
<dbReference type="RefSeq" id="NP_620466.1">
    <property type="nucleotide sequence ID" value="NC_003740.1"/>
</dbReference>
<dbReference type="GeneID" id="963858"/>
<dbReference type="KEGG" id="vg:963858"/>
<dbReference type="Proteomes" id="UP000001102">
    <property type="component" value="Genome"/>
</dbReference>
<dbReference type="GO" id="GO:0046740">
    <property type="term" value="P:transport of virus in host, cell to cell"/>
    <property type="evidence" value="ECO:0007669"/>
    <property type="project" value="UniProtKB-KW"/>
</dbReference>
<reference key="1">
    <citation type="journal article" date="1991" name="J. Gen. Virol.">
        <title>Nucleotide sequence of raspberry bushy dwarf virus RNA-2: a bicistronic component of a bipartite genome.</title>
        <authorList>
            <person name="Natsuaki T."/>
            <person name="Mayo M.A."/>
            <person name="Jolly C.A."/>
            <person name="Murant A.F."/>
        </authorList>
    </citation>
    <scope>NUCLEOTIDE SEQUENCE [GENOMIC RNA]</scope>
</reference>
<keyword id="KW-1185">Reference proteome</keyword>
<keyword id="KW-0813">Transport</keyword>
<keyword id="KW-0916">Viral movement protein</keyword>
<feature type="chain" id="PRO_0000402471" description="Putative movement protein">
    <location>
        <begin position="1"/>
        <end position="358"/>
    </location>
</feature>
<evidence type="ECO:0000305" key="1"/>
<proteinExistence type="predicted"/>
<name>MVP_RBDVR</name>
<organismHost>
    <name type="scientific">Rubus idaeus</name>
    <name type="common">Raspberry</name>
    <dbReference type="NCBI Taxonomy" id="32247"/>
</organismHost>
<organismHost>
    <name type="scientific">Rubus occidentalis</name>
    <name type="common">Black raspberry</name>
    <dbReference type="NCBI Taxonomy" id="75079"/>
</organismHost>
<organismHost>
    <name type="scientific">Rubus ursinus</name>
    <name type="common">California blackberry</name>
    <dbReference type="NCBI Taxonomy" id="75100"/>
</organismHost>
<comment type="function">
    <text evidence="1">Transports viral genome to neighboring plant cells directly through plasmosdesmata, without any budding. The movement protein allows efficient cell to cell propagation, by bypassing the host cell wall barrier (Potential).</text>
</comment>
<accession>Q86563</accession>